<evidence type="ECO:0000255" key="1">
    <source>
        <dbReference type="HAMAP-Rule" id="MF_00527"/>
    </source>
</evidence>
<name>3MGH_BACAA</name>
<dbReference type="EC" id="3.2.2.-" evidence="1"/>
<dbReference type="EMBL" id="CP001598">
    <property type="protein sequence ID" value="ACQ46722.1"/>
    <property type="molecule type" value="Genomic_DNA"/>
</dbReference>
<dbReference type="RefSeq" id="WP_001148814.1">
    <property type="nucleotide sequence ID" value="NC_012659.1"/>
</dbReference>
<dbReference type="SMR" id="C3P1N9"/>
<dbReference type="GeneID" id="45020936"/>
<dbReference type="KEGG" id="bai:BAA_0975"/>
<dbReference type="HOGENOM" id="CLU_060471_0_2_9"/>
<dbReference type="GO" id="GO:0003905">
    <property type="term" value="F:alkylbase DNA N-glycosylase activity"/>
    <property type="evidence" value="ECO:0007669"/>
    <property type="project" value="InterPro"/>
</dbReference>
<dbReference type="GO" id="GO:0003677">
    <property type="term" value="F:DNA binding"/>
    <property type="evidence" value="ECO:0007669"/>
    <property type="project" value="InterPro"/>
</dbReference>
<dbReference type="GO" id="GO:0006284">
    <property type="term" value="P:base-excision repair"/>
    <property type="evidence" value="ECO:0007669"/>
    <property type="project" value="InterPro"/>
</dbReference>
<dbReference type="CDD" id="cd00540">
    <property type="entry name" value="AAG"/>
    <property type="match status" value="1"/>
</dbReference>
<dbReference type="FunFam" id="3.10.300.10:FF:000001">
    <property type="entry name" value="Putative 3-methyladenine DNA glycosylase"/>
    <property type="match status" value="1"/>
</dbReference>
<dbReference type="Gene3D" id="3.10.300.10">
    <property type="entry name" value="Methylpurine-DNA glycosylase (MPG)"/>
    <property type="match status" value="1"/>
</dbReference>
<dbReference type="HAMAP" id="MF_00527">
    <property type="entry name" value="3MGH"/>
    <property type="match status" value="1"/>
</dbReference>
<dbReference type="InterPro" id="IPR011034">
    <property type="entry name" value="Formyl_transferase-like_C_sf"/>
</dbReference>
<dbReference type="InterPro" id="IPR003180">
    <property type="entry name" value="MPG"/>
</dbReference>
<dbReference type="InterPro" id="IPR036995">
    <property type="entry name" value="MPG_sf"/>
</dbReference>
<dbReference type="NCBIfam" id="TIGR00567">
    <property type="entry name" value="3mg"/>
    <property type="match status" value="1"/>
</dbReference>
<dbReference type="NCBIfam" id="NF002001">
    <property type="entry name" value="PRK00802.1-1"/>
    <property type="match status" value="1"/>
</dbReference>
<dbReference type="NCBIfam" id="NF002003">
    <property type="entry name" value="PRK00802.1-3"/>
    <property type="match status" value="1"/>
</dbReference>
<dbReference type="PANTHER" id="PTHR10429">
    <property type="entry name" value="DNA-3-METHYLADENINE GLYCOSYLASE"/>
    <property type="match status" value="1"/>
</dbReference>
<dbReference type="PANTHER" id="PTHR10429:SF0">
    <property type="entry name" value="DNA-3-METHYLADENINE GLYCOSYLASE"/>
    <property type="match status" value="1"/>
</dbReference>
<dbReference type="Pfam" id="PF02245">
    <property type="entry name" value="Pur_DNA_glyco"/>
    <property type="match status" value="1"/>
</dbReference>
<dbReference type="SUPFAM" id="SSF50486">
    <property type="entry name" value="FMT C-terminal domain-like"/>
    <property type="match status" value="1"/>
</dbReference>
<reference key="1">
    <citation type="submission" date="2009-04" db="EMBL/GenBank/DDBJ databases">
        <title>Genome sequence of Bacillus anthracis A0248.</title>
        <authorList>
            <person name="Dodson R.J."/>
            <person name="Munk A.C."/>
            <person name="Bruce D."/>
            <person name="Detter C."/>
            <person name="Tapia R."/>
            <person name="Sutton G."/>
            <person name="Sims D."/>
            <person name="Brettin T."/>
        </authorList>
    </citation>
    <scope>NUCLEOTIDE SEQUENCE [LARGE SCALE GENOMIC DNA]</scope>
    <source>
        <strain>A0248</strain>
    </source>
</reference>
<keyword id="KW-0227">DNA damage</keyword>
<keyword id="KW-0234">DNA repair</keyword>
<keyword id="KW-0378">Hydrolase</keyword>
<feature type="chain" id="PRO_1000146259" description="Putative 3-methyladenine DNA glycosylase">
    <location>
        <begin position="1"/>
        <end position="205"/>
    </location>
</feature>
<gene>
    <name type="ordered locus">BAA_0975</name>
</gene>
<organism>
    <name type="scientific">Bacillus anthracis (strain A0248)</name>
    <dbReference type="NCBI Taxonomy" id="592021"/>
    <lineage>
        <taxon>Bacteria</taxon>
        <taxon>Bacillati</taxon>
        <taxon>Bacillota</taxon>
        <taxon>Bacilli</taxon>
        <taxon>Bacillales</taxon>
        <taxon>Bacillaceae</taxon>
        <taxon>Bacillus</taxon>
        <taxon>Bacillus cereus group</taxon>
    </lineage>
</organism>
<accession>C3P1N9</accession>
<sequence>MQAPPSFYEGDTLEVAKKLLGQKLVHIVNGIKRSGIIVEVEAYKGPDDKAAHSYGGRRTDRTEVMFGAPGHAYVYLIYGMYHCFNVITAPVGTPQGVLIRALEPVDGIEEIKLARYNKTDITKAQYKNLTNGPGKLCRALGITLEERGVSLQSDTLHIELVPEEKHISSQYKITAGPRINIDYAEEAVHYPWRFYYEGHPFVSKK</sequence>
<comment type="similarity">
    <text evidence="1">Belongs to the DNA glycosylase MPG family.</text>
</comment>
<proteinExistence type="inferred from homology"/>
<protein>
    <recommendedName>
        <fullName evidence="1">Putative 3-methyladenine DNA glycosylase</fullName>
        <ecNumber evidence="1">3.2.2.-</ecNumber>
    </recommendedName>
</protein>